<dbReference type="EMBL" id="U31782">
    <property type="protein sequence ID" value="AAA79418.1"/>
    <property type="molecule type" value="Genomic_DNA"/>
</dbReference>
<dbReference type="SMR" id="P50770"/>
<dbReference type="Proteomes" id="UP000158064">
    <property type="component" value="Genome"/>
</dbReference>
<dbReference type="GO" id="GO:0042025">
    <property type="term" value="C:host cell nucleus"/>
    <property type="evidence" value="ECO:0007669"/>
    <property type="project" value="UniProtKB-SubCell"/>
</dbReference>
<dbReference type="GO" id="GO:0003677">
    <property type="term" value="F:DNA binding"/>
    <property type="evidence" value="ECO:0007669"/>
    <property type="project" value="UniProtKB-UniRule"/>
</dbReference>
<dbReference type="GO" id="GO:0003700">
    <property type="term" value="F:DNA-binding transcription factor activity"/>
    <property type="evidence" value="ECO:0007669"/>
    <property type="project" value="UniProtKB-UniRule"/>
</dbReference>
<dbReference type="GO" id="GO:0000166">
    <property type="term" value="F:nucleotide binding"/>
    <property type="evidence" value="ECO:0007669"/>
    <property type="project" value="UniProtKB-UniRule"/>
</dbReference>
<dbReference type="GO" id="GO:0006260">
    <property type="term" value="P:DNA replication"/>
    <property type="evidence" value="ECO:0007669"/>
    <property type="project" value="UniProtKB-KW"/>
</dbReference>
<dbReference type="GO" id="GO:0006351">
    <property type="term" value="P:DNA-templated transcription"/>
    <property type="evidence" value="ECO:0007669"/>
    <property type="project" value="UniProtKB-UniRule"/>
</dbReference>
<dbReference type="GO" id="GO:0006275">
    <property type="term" value="P:regulation of DNA replication"/>
    <property type="evidence" value="ECO:0007669"/>
    <property type="project" value="UniProtKB-UniRule"/>
</dbReference>
<dbReference type="GO" id="GO:0039693">
    <property type="term" value="P:viral DNA genome replication"/>
    <property type="evidence" value="ECO:0007669"/>
    <property type="project" value="UniProtKB-UniRule"/>
</dbReference>
<dbReference type="Gene3D" id="3.30.70.330">
    <property type="match status" value="1"/>
</dbReference>
<dbReference type="Gene3D" id="1.10.287.30">
    <property type="entry name" value="E2 (early) protein, N terminal domain, subdomain 1"/>
    <property type="match status" value="1"/>
</dbReference>
<dbReference type="Gene3D" id="2.170.200.10">
    <property type="entry name" value="Papillomavirus E2 early protein domain"/>
    <property type="match status" value="1"/>
</dbReference>
<dbReference type="HAMAP" id="MF_04001">
    <property type="entry name" value="PPV_E2"/>
    <property type="match status" value="1"/>
</dbReference>
<dbReference type="InterPro" id="IPR035975">
    <property type="entry name" value="E2/EBNA1_C_sf"/>
</dbReference>
<dbReference type="InterPro" id="IPR012677">
    <property type="entry name" value="Nucleotide-bd_a/b_plait_sf"/>
</dbReference>
<dbReference type="InterPro" id="IPR000427">
    <property type="entry name" value="Papillomavirus_E2_C"/>
</dbReference>
<dbReference type="InterPro" id="IPR001866">
    <property type="entry name" value="PPV_E2_N"/>
</dbReference>
<dbReference type="InterPro" id="IPR033668">
    <property type="entry name" value="Reg_prot_E2"/>
</dbReference>
<dbReference type="InterPro" id="IPR036050">
    <property type="entry name" value="Regulatory_protein_E2_N"/>
</dbReference>
<dbReference type="InterPro" id="IPR042503">
    <property type="entry name" value="Regulatory_protein_E2_N_1"/>
</dbReference>
<dbReference type="InterPro" id="IPR042504">
    <property type="entry name" value="Regulatory_protein_E2_N_2"/>
</dbReference>
<dbReference type="Pfam" id="PF00511">
    <property type="entry name" value="PPV_E2_C"/>
    <property type="match status" value="1"/>
</dbReference>
<dbReference type="Pfam" id="PF00508">
    <property type="entry name" value="PPV_E2_N"/>
    <property type="match status" value="1"/>
</dbReference>
<dbReference type="SUPFAM" id="SSF51332">
    <property type="entry name" value="E2 regulatory, transactivation domain"/>
    <property type="match status" value="1"/>
</dbReference>
<dbReference type="SUPFAM" id="SSF54957">
    <property type="entry name" value="Viral DNA-binding domain"/>
    <property type="match status" value="1"/>
</dbReference>
<feature type="chain" id="PRO_0000133203" description="Regulatory protein E2">
    <location>
        <begin position="1"/>
        <end position="467"/>
    </location>
</feature>
<feature type="region of interest" description="Transactivation domain" evidence="1">
    <location>
        <begin position="1"/>
        <end position="201"/>
    </location>
</feature>
<feature type="region of interest" description="Disordered" evidence="2">
    <location>
        <begin position="196"/>
        <end position="367"/>
    </location>
</feature>
<feature type="region of interest" description="DNA-binding domain" evidence="1">
    <location>
        <begin position="383"/>
        <end position="467"/>
    </location>
</feature>
<feature type="compositionally biased region" description="Low complexity" evidence="2">
    <location>
        <begin position="197"/>
        <end position="210"/>
    </location>
</feature>
<feature type="compositionally biased region" description="Polar residues" evidence="2">
    <location>
        <begin position="216"/>
        <end position="235"/>
    </location>
</feature>
<feature type="compositionally biased region" description="Basic residues" evidence="2">
    <location>
        <begin position="255"/>
        <end position="276"/>
    </location>
</feature>
<feature type="compositionally biased region" description="Low complexity" evidence="2">
    <location>
        <begin position="277"/>
        <end position="286"/>
    </location>
</feature>
<feature type="compositionally biased region" description="Basic residues" evidence="2">
    <location>
        <begin position="287"/>
        <end position="301"/>
    </location>
</feature>
<feature type="compositionally biased region" description="Low complexity" evidence="2">
    <location>
        <begin position="309"/>
        <end position="318"/>
    </location>
</feature>
<proteinExistence type="inferred from homology"/>
<keyword id="KW-0010">Activator</keyword>
<keyword id="KW-0235">DNA replication</keyword>
<keyword id="KW-0238">DNA-binding</keyword>
<keyword id="KW-0244">Early protein</keyword>
<keyword id="KW-1048">Host nucleus</keyword>
<keyword id="KW-0597">Phosphoprotein</keyword>
<keyword id="KW-1185">Reference proteome</keyword>
<keyword id="KW-0678">Repressor</keyword>
<keyword id="KW-0804">Transcription</keyword>
<keyword id="KW-0805">Transcription regulation</keyword>
<reference key="1">
    <citation type="submission" date="1995-10" db="EMBL/GenBank/DDBJ databases">
        <authorList>
            <person name="Delius H."/>
        </authorList>
    </citation>
    <scope>NUCLEOTIDE SEQUENCE [GENOMIC DNA]</scope>
</reference>
<name>VE2_HPV24</name>
<gene>
    <name evidence="1" type="primary">E2</name>
</gene>
<comment type="function">
    <text evidence="1">Plays a role in the initiation of viral DNA replication. A dimer of E2 interacts with a dimer of E1 in order to improve specificity of E1 DNA binding activity. Once the complex recognizes and binds DNA at specific sites, the E2 dimer is removed from DNA. E2 also regulates viral transcription through binding to the E2RE response element (5'-ACCNNNNNNGGT-3') present in multiple copies in the regulatory regions of the viral genome. Activates or represses transcription depending on E2RE's position with regards to proximal promoter elements including the TATA-box. Repression occurs by sterically hindering the assembly of the transcription initiation complex.</text>
</comment>
<comment type="subunit">
    <text evidence="1">Binds DNA as homodimer. Interacts with protein E1; this interaction greatly increases E1 DNA-binding activity. Interacts with protein L1; this interaction enhances E2-dependent replication and transcription activation. Interacts with protein L2; this interaction inhibits E2 transcriptional activity but not DNA replication function E2. Interacts with protein E7; this interaction inhibits E7 oncogenic activity. Interacts with host TAF1; this interaction modulates E2-dependent transcriptional regulation. Interacts with host BRD4; this interaction mediates E2 transcriptional activation function. Additionally, the interaction with host BRD4 on mitotic chromosomes mediates tethering of the viral genome. Interacts with host TOPBP1; this interaction is required for optimal viral DNA replication.</text>
</comment>
<comment type="subcellular location">
    <subcellularLocation>
        <location evidence="1">Host nucleus</location>
    </subcellularLocation>
</comment>
<comment type="PTM">
    <text evidence="1">Phosphorylated.</text>
</comment>
<comment type="similarity">
    <text evidence="1">Belongs to the papillomaviridae E2 protein family.</text>
</comment>
<accession>P50770</accession>
<protein>
    <recommendedName>
        <fullName evidence="1">Regulatory protein E2</fullName>
    </recommendedName>
</protein>
<organism>
    <name type="scientific">Human papillomavirus 24</name>
    <dbReference type="NCBI Taxonomy" id="37956"/>
    <lineage>
        <taxon>Viruses</taxon>
        <taxon>Monodnaviria</taxon>
        <taxon>Shotokuvirae</taxon>
        <taxon>Cossaviricota</taxon>
        <taxon>Papovaviricetes</taxon>
        <taxon>Zurhausenvirales</taxon>
        <taxon>Papillomaviridae</taxon>
        <taxon>Firstpapillomavirinae</taxon>
        <taxon>Betapapillomavirus</taxon>
        <taxon>Betapapillomavirus 1</taxon>
    </lineage>
</organism>
<organismHost>
    <name type="scientific">Homo sapiens</name>
    <name type="common">Human</name>
    <dbReference type="NCBI Taxonomy" id="9606"/>
</organismHost>
<evidence type="ECO:0000255" key="1">
    <source>
        <dbReference type="HAMAP-Rule" id="MF_04001"/>
    </source>
</evidence>
<evidence type="ECO:0000256" key="2">
    <source>
        <dbReference type="SAM" id="MobiDB-lite"/>
    </source>
</evidence>
<sequence length="467" mass="52856">MENLKKRFDVLQDLLMNIYEQGSDTLESQIEHWQALRREAVLLYYARQNGVLRLGYLPVPPLATSEAKAKQAISMVLQLQSLQQSPYGTEKWTLVDTSIETFKNTPENHFKKGPINVEVIYDGDPDNANLYTMWKYVYYMDDNDQWQKTESGANHTGIYYLIGEFKHYYVLFADDANRYSKSGQWEVRINKETVFAPVTSSTPPDSPGGSRELPGSTANSKASSPTQQPQQACSDETTKRKRYGRRESSPTDSRCRRRSSSRQKKQGRRARSRTRSRCSSTQTRSRSTSRRSRSTSRGNRRCRGDTPRGQRGVSTSSRGRGRGSRRSSSSSSPTPRTKASQRGCDTRSVRDSGISPGDVGRKLQTVSGRNSGRLGRLLEEALDPPVILLRGGANTLKCFRNRAKLRYRGHYKAFSTSWSWVAADGTERLGRSRLLVSFTSFKQRSGFLDLVRFPKGVDWSLGSFDKL</sequence>